<protein>
    <recommendedName>
        <fullName>Protein NRT1/ PTR FAMILY 5.16</fullName>
        <shortName>AtNPF5.16</shortName>
    </recommendedName>
</protein>
<proteinExistence type="evidence at transcript level"/>
<dbReference type="EMBL" id="AC006551">
    <property type="protein sequence ID" value="AAF18523.1"/>
    <property type="molecule type" value="Genomic_DNA"/>
</dbReference>
<dbReference type="EMBL" id="CP002684">
    <property type="protein sequence ID" value="AEE30255.1"/>
    <property type="molecule type" value="Genomic_DNA"/>
</dbReference>
<dbReference type="EMBL" id="BT004638">
    <property type="protein sequence ID" value="AAO42884.1"/>
    <property type="molecule type" value="mRNA"/>
</dbReference>
<dbReference type="EMBL" id="AK227516">
    <property type="protein sequence ID" value="BAE99516.1"/>
    <property type="molecule type" value="mRNA"/>
</dbReference>
<dbReference type="PIR" id="G86358">
    <property type="entry name" value="G86358"/>
</dbReference>
<dbReference type="RefSeq" id="NP_173671.1">
    <property type="nucleotide sequence ID" value="NM_102104.4"/>
</dbReference>
<dbReference type="SMR" id="Q9SK96"/>
<dbReference type="BioGRID" id="24100">
    <property type="interactions" value="4"/>
</dbReference>
<dbReference type="FunCoup" id="Q9SK96">
    <property type="interactions" value="1582"/>
</dbReference>
<dbReference type="IntAct" id="Q9SK96">
    <property type="interactions" value="4"/>
</dbReference>
<dbReference type="STRING" id="3702.Q9SK96"/>
<dbReference type="PaxDb" id="3702-AT1G22550.1"/>
<dbReference type="ProteomicsDB" id="224833"/>
<dbReference type="EnsemblPlants" id="AT1G22550.1">
    <property type="protein sequence ID" value="AT1G22550.1"/>
    <property type="gene ID" value="AT1G22550"/>
</dbReference>
<dbReference type="GeneID" id="838861"/>
<dbReference type="Gramene" id="AT1G22550.1">
    <property type="protein sequence ID" value="AT1G22550.1"/>
    <property type="gene ID" value="AT1G22550"/>
</dbReference>
<dbReference type="KEGG" id="ath:AT1G22550"/>
<dbReference type="Araport" id="AT1G22550"/>
<dbReference type="TAIR" id="AT1G22550">
    <property type="gene designation" value="NPF5.16"/>
</dbReference>
<dbReference type="eggNOG" id="KOG1237">
    <property type="taxonomic scope" value="Eukaryota"/>
</dbReference>
<dbReference type="HOGENOM" id="CLU_009313_4_1_1"/>
<dbReference type="InParanoid" id="Q9SK96"/>
<dbReference type="OMA" id="ITVINWA"/>
<dbReference type="PhylomeDB" id="Q9SK96"/>
<dbReference type="PRO" id="PR:Q9SK96"/>
<dbReference type="Proteomes" id="UP000006548">
    <property type="component" value="Chromosome 1"/>
</dbReference>
<dbReference type="ExpressionAtlas" id="Q9SK96">
    <property type="expression patterns" value="baseline and differential"/>
</dbReference>
<dbReference type="GO" id="GO:0009705">
    <property type="term" value="C:plant-type vacuole membrane"/>
    <property type="evidence" value="ECO:0000314"/>
    <property type="project" value="TAIR"/>
</dbReference>
<dbReference type="GO" id="GO:0071916">
    <property type="term" value="F:dipeptide transmembrane transporter activity"/>
    <property type="evidence" value="ECO:0007669"/>
    <property type="project" value="InterPro"/>
</dbReference>
<dbReference type="GO" id="GO:0080054">
    <property type="term" value="F:low-affinity nitrate transmembrane transporter activity"/>
    <property type="evidence" value="ECO:0000314"/>
    <property type="project" value="TAIR"/>
</dbReference>
<dbReference type="GO" id="GO:0042937">
    <property type="term" value="F:tripeptide transmembrane transporter activity"/>
    <property type="evidence" value="ECO:0007669"/>
    <property type="project" value="InterPro"/>
</dbReference>
<dbReference type="GO" id="GO:0015706">
    <property type="term" value="P:nitrate transmembrane transport"/>
    <property type="evidence" value="ECO:0000314"/>
    <property type="project" value="TAIR"/>
</dbReference>
<dbReference type="CDD" id="cd17417">
    <property type="entry name" value="MFS_NPF5"/>
    <property type="match status" value="1"/>
</dbReference>
<dbReference type="FunFam" id="1.20.1250.20:FF:000147">
    <property type="entry name" value="Protein NRT1/ PTR family 5.10"/>
    <property type="match status" value="1"/>
</dbReference>
<dbReference type="Gene3D" id="1.20.1250.20">
    <property type="entry name" value="MFS general substrate transporter like domains"/>
    <property type="match status" value="1"/>
</dbReference>
<dbReference type="InterPro" id="IPR036259">
    <property type="entry name" value="MFS_trans_sf"/>
</dbReference>
<dbReference type="InterPro" id="IPR044739">
    <property type="entry name" value="NRT1/PTR"/>
</dbReference>
<dbReference type="InterPro" id="IPR000109">
    <property type="entry name" value="POT_fam"/>
</dbReference>
<dbReference type="InterPro" id="IPR018456">
    <property type="entry name" value="PTR2_symporter_CS"/>
</dbReference>
<dbReference type="PANTHER" id="PTHR11654">
    <property type="entry name" value="OLIGOPEPTIDE TRANSPORTER-RELATED"/>
    <property type="match status" value="1"/>
</dbReference>
<dbReference type="Pfam" id="PF00854">
    <property type="entry name" value="PTR2"/>
    <property type="match status" value="1"/>
</dbReference>
<dbReference type="SUPFAM" id="SSF103473">
    <property type="entry name" value="MFS general substrate transporter"/>
    <property type="match status" value="1"/>
</dbReference>
<dbReference type="PROSITE" id="PS01022">
    <property type="entry name" value="PTR2_1"/>
    <property type="match status" value="1"/>
</dbReference>
<feature type="chain" id="PRO_0000399944" description="Protein NRT1/ PTR FAMILY 5.16">
    <location>
        <begin position="1"/>
        <end position="564"/>
    </location>
</feature>
<feature type="transmembrane region" description="Helical" evidence="3">
    <location>
        <begin position="49"/>
        <end position="69"/>
    </location>
</feature>
<feature type="transmembrane region" description="Helical" evidence="3">
    <location>
        <begin position="80"/>
        <end position="100"/>
    </location>
</feature>
<feature type="transmembrane region" description="Helical" evidence="3">
    <location>
        <begin position="110"/>
        <end position="130"/>
    </location>
</feature>
<feature type="transmembrane region" description="Helical" evidence="3">
    <location>
        <begin position="145"/>
        <end position="165"/>
    </location>
</feature>
<feature type="transmembrane region" description="Helical" evidence="3">
    <location>
        <begin position="192"/>
        <end position="212"/>
    </location>
</feature>
<feature type="transmembrane region" description="Helical" evidence="3">
    <location>
        <begin position="220"/>
        <end position="240"/>
    </location>
</feature>
<feature type="transmembrane region" description="Helical" evidence="3">
    <location>
        <begin position="327"/>
        <end position="347"/>
    </location>
</feature>
<feature type="transmembrane region" description="Helical" evidence="3">
    <location>
        <begin position="358"/>
        <end position="378"/>
    </location>
</feature>
<feature type="transmembrane region" description="Helical" evidence="3">
    <location>
        <begin position="408"/>
        <end position="428"/>
    </location>
</feature>
<feature type="transmembrane region" description="Helical" evidence="3">
    <location>
        <begin position="450"/>
        <end position="470"/>
    </location>
</feature>
<feature type="transmembrane region" description="Helical" evidence="3">
    <location>
        <begin position="486"/>
        <end position="506"/>
    </location>
</feature>
<feature type="transmembrane region" description="Helical" evidence="3">
    <location>
        <begin position="533"/>
        <end position="553"/>
    </location>
</feature>
<feature type="modified residue" description="Phosphothreonine" evidence="2">
    <location>
        <position position="104"/>
    </location>
</feature>
<feature type="sequence conflict" description="In Ref. 3; AAO42884." evidence="5" ref="3">
    <original>G</original>
    <variation>V</variation>
    <location>
        <position position="263"/>
    </location>
</feature>
<comment type="subcellular location">
    <subcellularLocation>
        <location evidence="1">Membrane</location>
        <topology evidence="1">Multi-pass membrane protein</topology>
    </subcellularLocation>
</comment>
<comment type="tissue specificity">
    <text evidence="4">Expressed in shoots and roots.</text>
</comment>
<comment type="similarity">
    <text evidence="5">Belongs to the major facilitator superfamily. Proton-dependent oligopeptide transporter (POT/PTR) (TC 2.A.17) family.</text>
</comment>
<organism>
    <name type="scientific">Arabidopsis thaliana</name>
    <name type="common">Mouse-ear cress</name>
    <dbReference type="NCBI Taxonomy" id="3702"/>
    <lineage>
        <taxon>Eukaryota</taxon>
        <taxon>Viridiplantae</taxon>
        <taxon>Streptophyta</taxon>
        <taxon>Embryophyta</taxon>
        <taxon>Tracheophyta</taxon>
        <taxon>Spermatophyta</taxon>
        <taxon>Magnoliopsida</taxon>
        <taxon>eudicotyledons</taxon>
        <taxon>Gunneridae</taxon>
        <taxon>Pentapetalae</taxon>
        <taxon>rosids</taxon>
        <taxon>malvids</taxon>
        <taxon>Brassicales</taxon>
        <taxon>Brassicaceae</taxon>
        <taxon>Camelineae</taxon>
        <taxon>Arabidopsis</taxon>
    </lineage>
</organism>
<keyword id="KW-0472">Membrane</keyword>
<keyword id="KW-0597">Phosphoprotein</keyword>
<keyword id="KW-1185">Reference proteome</keyword>
<keyword id="KW-0812">Transmembrane</keyword>
<keyword id="KW-1133">Transmembrane helix</keyword>
<keyword id="KW-0813">Transport</keyword>
<accession>Q9SK96</accession>
<accession>Q84VX2</accession>
<sequence>MAIAEEEAALIEDSVSDSVDHRGLPAGKSSTGGWRSAWYIIGVEVGERFAYFGIGSNLITYLTGPLGQSTATAAVNVNTWSGTASILPVLGAFIADAYLGRYRTIVVASLIYILGLGLLTLSSILILMGLSEQRQHNRNASAKPFFWVNILFFCSLYLVAIGQGGHKPCVQAFGADQFDVGDPKERISRGSFFNWWFLSLSAGITLSIIVVVYVQDNVNWALGFGIPCLFMVMALALFLFGRKTYRYPRGDREGKNNAFARIGRVFLVAFKNRKLKLTHSGQLEVGSYKKCKGQLEFLAKALLPGEGGVEPCSSRDVEDAMALVRLIPIWITSVVSTIPYAQYATFFTKQGVTVDRKILPGFEIPPASFQALIGLSIFISVPTYERVFLPLARLITKKPSGITMLQRIGAGMVLSSLNMVVAALVEMKRLETAKEHGLVDRPDATIPMSIWWFVPQYLLLGMIDVFSLVGTQEFFYDQVPTELRSIGLALSLSAMGLASFLSGFLITVINWATGKNGGDSWFNTNLNRAHVDYFYWLLAAFTAIGFLAFLLLSRLYVYRRVDQV</sequence>
<name>PTR10_ARATH</name>
<evidence type="ECO:0000250" key="1"/>
<evidence type="ECO:0000250" key="2">
    <source>
        <dbReference type="UniProtKB" id="Q05085"/>
    </source>
</evidence>
<evidence type="ECO:0000255" key="3"/>
<evidence type="ECO:0000269" key="4">
    <source>
    </source>
</evidence>
<evidence type="ECO:0000305" key="5"/>
<reference key="1">
    <citation type="journal article" date="2000" name="Nature">
        <title>Sequence and analysis of chromosome 1 of the plant Arabidopsis thaliana.</title>
        <authorList>
            <person name="Theologis A."/>
            <person name="Ecker J.R."/>
            <person name="Palm C.J."/>
            <person name="Federspiel N.A."/>
            <person name="Kaul S."/>
            <person name="White O."/>
            <person name="Alonso J."/>
            <person name="Altafi H."/>
            <person name="Araujo R."/>
            <person name="Bowman C.L."/>
            <person name="Brooks S.Y."/>
            <person name="Buehler E."/>
            <person name="Chan A."/>
            <person name="Chao Q."/>
            <person name="Chen H."/>
            <person name="Cheuk R.F."/>
            <person name="Chin C.W."/>
            <person name="Chung M.K."/>
            <person name="Conn L."/>
            <person name="Conway A.B."/>
            <person name="Conway A.R."/>
            <person name="Creasy T.H."/>
            <person name="Dewar K."/>
            <person name="Dunn P."/>
            <person name="Etgu P."/>
            <person name="Feldblyum T.V."/>
            <person name="Feng J.-D."/>
            <person name="Fong B."/>
            <person name="Fujii C.Y."/>
            <person name="Gill J.E."/>
            <person name="Goldsmith A.D."/>
            <person name="Haas B."/>
            <person name="Hansen N.F."/>
            <person name="Hughes B."/>
            <person name="Huizar L."/>
            <person name="Hunter J.L."/>
            <person name="Jenkins J."/>
            <person name="Johnson-Hopson C."/>
            <person name="Khan S."/>
            <person name="Khaykin E."/>
            <person name="Kim C.J."/>
            <person name="Koo H.L."/>
            <person name="Kremenetskaia I."/>
            <person name="Kurtz D.B."/>
            <person name="Kwan A."/>
            <person name="Lam B."/>
            <person name="Langin-Hooper S."/>
            <person name="Lee A."/>
            <person name="Lee J.M."/>
            <person name="Lenz C.A."/>
            <person name="Li J.H."/>
            <person name="Li Y.-P."/>
            <person name="Lin X."/>
            <person name="Liu S.X."/>
            <person name="Liu Z.A."/>
            <person name="Luros J.S."/>
            <person name="Maiti R."/>
            <person name="Marziali A."/>
            <person name="Militscher J."/>
            <person name="Miranda M."/>
            <person name="Nguyen M."/>
            <person name="Nierman W.C."/>
            <person name="Osborne B.I."/>
            <person name="Pai G."/>
            <person name="Peterson J."/>
            <person name="Pham P.K."/>
            <person name="Rizzo M."/>
            <person name="Rooney T."/>
            <person name="Rowley D."/>
            <person name="Sakano H."/>
            <person name="Salzberg S.L."/>
            <person name="Schwartz J.R."/>
            <person name="Shinn P."/>
            <person name="Southwick A.M."/>
            <person name="Sun H."/>
            <person name="Tallon L.J."/>
            <person name="Tambunga G."/>
            <person name="Toriumi M.J."/>
            <person name="Town C.D."/>
            <person name="Utterback T."/>
            <person name="Van Aken S."/>
            <person name="Vaysberg M."/>
            <person name="Vysotskaia V.S."/>
            <person name="Walker M."/>
            <person name="Wu D."/>
            <person name="Yu G."/>
            <person name="Fraser C.M."/>
            <person name="Venter J.C."/>
            <person name="Davis R.W."/>
        </authorList>
    </citation>
    <scope>NUCLEOTIDE SEQUENCE [LARGE SCALE GENOMIC DNA]</scope>
    <source>
        <strain>cv. Columbia</strain>
    </source>
</reference>
<reference key="2">
    <citation type="journal article" date="2017" name="Plant J.">
        <title>Araport11: a complete reannotation of the Arabidopsis thaliana reference genome.</title>
        <authorList>
            <person name="Cheng C.Y."/>
            <person name="Krishnakumar V."/>
            <person name="Chan A.P."/>
            <person name="Thibaud-Nissen F."/>
            <person name="Schobel S."/>
            <person name="Town C.D."/>
        </authorList>
    </citation>
    <scope>GENOME REANNOTATION</scope>
    <source>
        <strain>cv. Columbia</strain>
    </source>
</reference>
<reference key="3">
    <citation type="journal article" date="2003" name="Science">
        <title>Empirical analysis of transcriptional activity in the Arabidopsis genome.</title>
        <authorList>
            <person name="Yamada K."/>
            <person name="Lim J."/>
            <person name="Dale J.M."/>
            <person name="Chen H."/>
            <person name="Shinn P."/>
            <person name="Palm C.J."/>
            <person name="Southwick A.M."/>
            <person name="Wu H.C."/>
            <person name="Kim C.J."/>
            <person name="Nguyen M."/>
            <person name="Pham P.K."/>
            <person name="Cheuk R.F."/>
            <person name="Karlin-Newmann G."/>
            <person name="Liu S.X."/>
            <person name="Lam B."/>
            <person name="Sakano H."/>
            <person name="Wu T."/>
            <person name="Yu G."/>
            <person name="Miranda M."/>
            <person name="Quach H.L."/>
            <person name="Tripp M."/>
            <person name="Chang C.H."/>
            <person name="Lee J.M."/>
            <person name="Toriumi M.J."/>
            <person name="Chan M.M."/>
            <person name="Tang C.C."/>
            <person name="Onodera C.S."/>
            <person name="Deng J.M."/>
            <person name="Akiyama K."/>
            <person name="Ansari Y."/>
            <person name="Arakawa T."/>
            <person name="Banh J."/>
            <person name="Banno F."/>
            <person name="Bowser L."/>
            <person name="Brooks S.Y."/>
            <person name="Carninci P."/>
            <person name="Chao Q."/>
            <person name="Choy N."/>
            <person name="Enju A."/>
            <person name="Goldsmith A.D."/>
            <person name="Gurjal M."/>
            <person name="Hansen N.F."/>
            <person name="Hayashizaki Y."/>
            <person name="Johnson-Hopson C."/>
            <person name="Hsuan V.W."/>
            <person name="Iida K."/>
            <person name="Karnes M."/>
            <person name="Khan S."/>
            <person name="Koesema E."/>
            <person name="Ishida J."/>
            <person name="Jiang P.X."/>
            <person name="Jones T."/>
            <person name="Kawai J."/>
            <person name="Kamiya A."/>
            <person name="Meyers C."/>
            <person name="Nakajima M."/>
            <person name="Narusaka M."/>
            <person name="Seki M."/>
            <person name="Sakurai T."/>
            <person name="Satou M."/>
            <person name="Tamse R."/>
            <person name="Vaysberg M."/>
            <person name="Wallender E.K."/>
            <person name="Wong C."/>
            <person name="Yamamura Y."/>
            <person name="Yuan S."/>
            <person name="Shinozaki K."/>
            <person name="Davis R.W."/>
            <person name="Theologis A."/>
            <person name="Ecker J.R."/>
        </authorList>
    </citation>
    <scope>NUCLEOTIDE SEQUENCE [LARGE SCALE MRNA]</scope>
    <source>
        <strain>cv. Columbia</strain>
    </source>
</reference>
<reference key="4">
    <citation type="submission" date="2006-07" db="EMBL/GenBank/DDBJ databases">
        <title>Large-scale analysis of RIKEN Arabidopsis full-length (RAFL) cDNAs.</title>
        <authorList>
            <person name="Totoki Y."/>
            <person name="Seki M."/>
            <person name="Ishida J."/>
            <person name="Nakajima M."/>
            <person name="Enju A."/>
            <person name="Kamiya A."/>
            <person name="Narusaka M."/>
            <person name="Shin-i T."/>
            <person name="Nakagawa M."/>
            <person name="Sakamoto N."/>
            <person name="Oishi K."/>
            <person name="Kohara Y."/>
            <person name="Kobayashi M."/>
            <person name="Toyoda A."/>
            <person name="Sakaki Y."/>
            <person name="Sakurai T."/>
            <person name="Iida K."/>
            <person name="Akiyama K."/>
            <person name="Satou M."/>
            <person name="Toyoda T."/>
            <person name="Konagaya A."/>
            <person name="Carninci P."/>
            <person name="Kawai J."/>
            <person name="Hayashizaki Y."/>
            <person name="Shinozaki K."/>
        </authorList>
    </citation>
    <scope>NUCLEOTIDE SEQUENCE [LARGE SCALE MRNA]</scope>
    <source>
        <strain>cv. Columbia</strain>
    </source>
</reference>
<reference key="5">
    <citation type="journal article" date="2007" name="FEBS Lett.">
        <title>Nitrate transporters and peptide transporters.</title>
        <authorList>
            <person name="Tsay Y.F."/>
            <person name="Chiu C.C."/>
            <person name="Tsai C.B."/>
            <person name="Ho C.H."/>
            <person name="Hsu P.K."/>
        </authorList>
    </citation>
    <scope>TISSUE SPECIFICITY</scope>
    <scope>GENE FAMILY</scope>
</reference>
<reference key="6">
    <citation type="journal article" date="2010" name="Plant Cell">
        <title>The Arabidopsis nitrate transporter NRT1.8 functions in nitrate removal from the xylem sap and mediates cadmium tolerance.</title>
        <authorList>
            <person name="Li J.Y."/>
            <person name="Fu Y.L."/>
            <person name="Pike S.M."/>
            <person name="Bao J."/>
            <person name="Tian W."/>
            <person name="Zhang Y."/>
            <person name="Chen C.Z."/>
            <person name="Zhang Y."/>
            <person name="Li H.M."/>
            <person name="Huang J."/>
            <person name="Li L.G."/>
            <person name="Schroeder J.I."/>
            <person name="Gassmann W."/>
            <person name="Gong J.M."/>
        </authorList>
    </citation>
    <scope>GENE FAMILY</scope>
</reference>
<reference key="7">
    <citation type="journal article" date="2014" name="Trends Plant Sci.">
        <title>A unified nomenclature of NITRATE TRANSPORTER 1/PEPTIDE TRANSPORTER family members in plants.</title>
        <authorList>
            <person name="Leran S."/>
            <person name="Varala K."/>
            <person name="Boyer J.C."/>
            <person name="Chiurazzi M."/>
            <person name="Crawford N."/>
            <person name="Daniel-Vedele F."/>
            <person name="David L."/>
            <person name="Dickstein R."/>
            <person name="Fernandez E."/>
            <person name="Forde B."/>
            <person name="Gassmann W."/>
            <person name="Geiger D."/>
            <person name="Gojon A."/>
            <person name="Gong J.M."/>
            <person name="Halkier B.A."/>
            <person name="Harris J.M."/>
            <person name="Hedrich R."/>
            <person name="Limami A.M."/>
            <person name="Rentsch D."/>
            <person name="Seo M."/>
            <person name="Tsay Y.F."/>
            <person name="Zhang M."/>
            <person name="Coruzzi G."/>
            <person name="Lacombe B."/>
        </authorList>
    </citation>
    <scope>GENE FAMILY</scope>
    <scope>NOMENCLATURE</scope>
</reference>
<gene>
    <name type="primary">NPF5.16</name>
    <name type="ordered locus">At1g22550</name>
    <name type="ORF">F12K8.11</name>
</gene>